<comment type="function">
    <text evidence="1">May be involved in a process influencing telomere capping.</text>
</comment>
<comment type="subcellular location">
    <subcellularLocation>
        <location evidence="1">Cytoplasm</location>
    </subcellularLocation>
</comment>
<comment type="similarity">
    <text evidence="3">Belongs to the RTC5 family.</text>
</comment>
<gene>
    <name type="primary">RTC5</name>
    <name type="ordered locus">PAS_chr3_0111</name>
</gene>
<keyword id="KW-0963">Cytoplasm</keyword>
<keyword id="KW-1185">Reference proteome</keyword>
<evidence type="ECO:0000250" key="1"/>
<evidence type="ECO:0000255" key="2">
    <source>
        <dbReference type="PROSITE-ProRule" id="PRU01234"/>
    </source>
</evidence>
<evidence type="ECO:0000305" key="3"/>
<reference key="1">
    <citation type="journal article" date="2009" name="Nat. Biotechnol.">
        <title>Genome sequence of the recombinant protein production host Pichia pastoris.</title>
        <authorList>
            <person name="De Schutter K."/>
            <person name="Lin Y.-C."/>
            <person name="Tiels P."/>
            <person name="Van Hecke A."/>
            <person name="Glinka S."/>
            <person name="Weber-Lehmann J."/>
            <person name="Rouze P."/>
            <person name="Van de Peer Y."/>
            <person name="Callewaert N."/>
        </authorList>
    </citation>
    <scope>NUCLEOTIDE SEQUENCE [LARGE SCALE GENOMIC DNA]</scope>
    <source>
        <strain>GS115 / ATCC 20864</strain>
    </source>
</reference>
<feature type="chain" id="PRO_0000408840" description="Restriction of telomere capping protein 5">
    <location>
        <begin position="1"/>
        <end position="577"/>
    </location>
</feature>
<feature type="domain" description="TLDc" evidence="2">
    <location>
        <begin position="301"/>
        <end position="524"/>
    </location>
</feature>
<sequence length="577" mass="65251">MGQSVSSEEETKQDYRTVKVSKGQLQRLFDKNCLSLLTPIEVYSLKENLHVRDINNDKQLSIDETVQLLGLPKDCPCNEVVYDFVRVLGWFPFFNSVDPLKGISLPMLIRSVVLSRSKSFFKLFKGDSSYKFEDLVFLVLSILSEPKDLVEKNLDSSCDETGVLELALQGDSNIHWAQCKVIKDFDNTNIKERKVSAYNLAIFLTFLLAISRPLMSDYSQHLSQWSNFMSHGMNLVRSFDSSITERSLHSKTVGYAAFISTIETKMPNVLHPLDALLDSLLFMKQSKGASDVTPEFSVSTKLINEYSLAQLSTVLPLELCYSRLRKLYVGSESGFSMRSFESKCFNWNAPTITFISGHRITSKKTKRYLLFEEQFPRSRAAEDETGSDFDHANDDSARLTFAVFLNQHWKTSNKEPFGDSKTTIFQLSPRQAVFKSSTFRKDYCYFNTSGGGIGFGNEEPYLKNNTTKFRPGNVSLTIDSGLEFCVFRHLGKGGSFNPMVLEDDSIPVYEDRFVISDLEVWGCGSEKELLEQAKRWAWEEKEAMARQRINADTLGEERAFLEMAGLVGNHGASGGSV</sequence>
<organism>
    <name type="scientific">Komagataella phaffii (strain GS115 / ATCC 20864)</name>
    <name type="common">Yeast</name>
    <name type="synonym">Pichia pastoris</name>
    <dbReference type="NCBI Taxonomy" id="644223"/>
    <lineage>
        <taxon>Eukaryota</taxon>
        <taxon>Fungi</taxon>
        <taxon>Dikarya</taxon>
        <taxon>Ascomycota</taxon>
        <taxon>Saccharomycotina</taxon>
        <taxon>Pichiomycetes</taxon>
        <taxon>Pichiales</taxon>
        <taxon>Pichiaceae</taxon>
        <taxon>Komagataella</taxon>
    </lineage>
</organism>
<name>RTC5_KOMPG</name>
<protein>
    <recommendedName>
        <fullName>Restriction of telomere capping protein 5</fullName>
    </recommendedName>
</protein>
<accession>C4R3K5</accession>
<proteinExistence type="inferred from homology"/>
<dbReference type="EMBL" id="FN392321">
    <property type="protein sequence ID" value="CAY70040.1"/>
    <property type="molecule type" value="Genomic_DNA"/>
</dbReference>
<dbReference type="RefSeq" id="XP_002492320.1">
    <property type="nucleotide sequence ID" value="XM_002492275.1"/>
</dbReference>
<dbReference type="SMR" id="C4R3K5"/>
<dbReference type="FunCoup" id="C4R3K5">
    <property type="interactions" value="9"/>
</dbReference>
<dbReference type="STRING" id="644223.C4R3K5"/>
<dbReference type="EnsemblFungi" id="CAY70040">
    <property type="protein sequence ID" value="CAY70040"/>
    <property type="gene ID" value="PAS_chr3_0111"/>
</dbReference>
<dbReference type="GeneID" id="8199391"/>
<dbReference type="KEGG" id="ppa:PAS_chr3_0111"/>
<dbReference type="eggNOG" id="ENOG502QV3R">
    <property type="taxonomic scope" value="Eukaryota"/>
</dbReference>
<dbReference type="HOGENOM" id="CLU_011918_1_0_1"/>
<dbReference type="InParanoid" id="C4R3K5"/>
<dbReference type="OMA" id="KWEFEAR"/>
<dbReference type="OrthoDB" id="289228at2759"/>
<dbReference type="Proteomes" id="UP000000314">
    <property type="component" value="Chromosome 3"/>
</dbReference>
<dbReference type="GO" id="GO:0000329">
    <property type="term" value="C:fungal-type vacuole membrane"/>
    <property type="evidence" value="ECO:0007669"/>
    <property type="project" value="EnsemblFungi"/>
</dbReference>
<dbReference type="GO" id="GO:0005634">
    <property type="term" value="C:nucleus"/>
    <property type="evidence" value="ECO:0007669"/>
    <property type="project" value="TreeGrafter"/>
</dbReference>
<dbReference type="GO" id="GO:0032984">
    <property type="term" value="P:protein-containing complex disassembly"/>
    <property type="evidence" value="ECO:0007669"/>
    <property type="project" value="EnsemblFungi"/>
</dbReference>
<dbReference type="GO" id="GO:0006979">
    <property type="term" value="P:response to oxidative stress"/>
    <property type="evidence" value="ECO:0007669"/>
    <property type="project" value="TreeGrafter"/>
</dbReference>
<dbReference type="InterPro" id="IPR006571">
    <property type="entry name" value="TLDc_dom"/>
</dbReference>
<dbReference type="PANTHER" id="PTHR23354">
    <property type="entry name" value="NUCLEOLAR PROTEIN 7/ESTROGEN RECEPTOR COACTIVATOR-RELATED"/>
    <property type="match status" value="1"/>
</dbReference>
<dbReference type="PANTHER" id="PTHR23354:SF130">
    <property type="entry name" value="RESTRICTION OF TELOMERE CAPPING PROTEIN 5"/>
    <property type="match status" value="1"/>
</dbReference>
<dbReference type="Pfam" id="PF07534">
    <property type="entry name" value="TLD"/>
    <property type="match status" value="1"/>
</dbReference>
<dbReference type="SMART" id="SM00584">
    <property type="entry name" value="TLDc"/>
    <property type="match status" value="1"/>
</dbReference>
<dbReference type="PROSITE" id="PS51886">
    <property type="entry name" value="TLDC"/>
    <property type="match status" value="1"/>
</dbReference>